<evidence type="ECO:0000250" key="1"/>
<evidence type="ECO:0000250" key="2">
    <source>
        <dbReference type="UniProtKB" id="P18064"/>
    </source>
</evidence>
<evidence type="ECO:0000255" key="3">
    <source>
        <dbReference type="PROSITE-ProRule" id="PRU01230"/>
    </source>
</evidence>
<evidence type="ECO:0000256" key="4">
    <source>
        <dbReference type="SAM" id="MobiDB-lite"/>
    </source>
</evidence>
<evidence type="ECO:0000305" key="5"/>
<comment type="function">
    <text>Guanine nucleotide-binding proteins (G proteins) are involved as modulators or transducers in various transmembrane signaling systems.</text>
</comment>
<comment type="cofactor">
    <cofactor evidence="2">
        <name>Mg(2+)</name>
        <dbReference type="ChEBI" id="CHEBI:18420"/>
    </cofactor>
</comment>
<comment type="subunit">
    <text>G proteins are composed of 3 units; alpha, beta and gamma. The alpha chain contains the guanine nucleotide binding site.</text>
</comment>
<comment type="domain">
    <text evidence="1">The helical domain (69-189) is required for self-activation.</text>
</comment>
<comment type="similarity">
    <text evidence="5">Belongs to the G-alpha family.</text>
</comment>
<feature type="initiator methionine" description="Removed" evidence="1">
    <location>
        <position position="1"/>
    </location>
</feature>
<feature type="chain" id="PRO_0000203625" description="Guanine nucleotide-binding protein alpha-1 subunit">
    <location>
        <begin position="2"/>
        <end position="384"/>
    </location>
</feature>
<feature type="domain" description="G-alpha" evidence="3">
    <location>
        <begin position="38"/>
        <end position="384"/>
    </location>
</feature>
<feature type="region of interest" description="Disordered" evidence="4">
    <location>
        <begin position="1"/>
        <end position="22"/>
    </location>
</feature>
<feature type="region of interest" description="G1 motif" evidence="3">
    <location>
        <begin position="41"/>
        <end position="54"/>
    </location>
</feature>
<feature type="region of interest" description="G2 motif" evidence="3">
    <location>
        <begin position="186"/>
        <end position="194"/>
    </location>
</feature>
<feature type="region of interest" description="G3 motif" evidence="3">
    <location>
        <begin position="215"/>
        <end position="224"/>
    </location>
</feature>
<feature type="region of interest" description="G4 motif" evidence="3">
    <location>
        <begin position="284"/>
        <end position="291"/>
    </location>
</feature>
<feature type="region of interest" description="G5 motif" evidence="3">
    <location>
        <begin position="354"/>
        <end position="359"/>
    </location>
</feature>
<feature type="binding site" evidence="2">
    <location>
        <position position="49"/>
    </location>
    <ligand>
        <name>GTP</name>
        <dbReference type="ChEBI" id="CHEBI:37565"/>
    </ligand>
</feature>
<feature type="binding site" evidence="2">
    <location>
        <position position="50"/>
    </location>
    <ligand>
        <name>GTP</name>
        <dbReference type="ChEBI" id="CHEBI:37565"/>
    </ligand>
</feature>
<feature type="binding site" evidence="2">
    <location>
        <position position="51"/>
    </location>
    <ligand>
        <name>GTP</name>
        <dbReference type="ChEBI" id="CHEBI:37565"/>
    </ligand>
</feature>
<feature type="binding site" evidence="2">
    <location>
        <position position="52"/>
    </location>
    <ligand>
        <name>GTP</name>
        <dbReference type="ChEBI" id="CHEBI:37565"/>
    </ligand>
</feature>
<feature type="binding site" evidence="2">
    <location>
        <position position="53"/>
    </location>
    <ligand>
        <name>GTP</name>
        <dbReference type="ChEBI" id="CHEBI:37565"/>
    </ligand>
</feature>
<feature type="binding site" evidence="2">
    <location>
        <position position="53"/>
    </location>
    <ligand>
        <name>Mg(2+)</name>
        <dbReference type="ChEBI" id="CHEBI:18420"/>
    </ligand>
</feature>
<feature type="binding site" evidence="2">
    <location>
        <position position="54"/>
    </location>
    <ligand>
        <name>GTP</name>
        <dbReference type="ChEBI" id="CHEBI:37565"/>
    </ligand>
</feature>
<feature type="binding site" evidence="2">
    <location>
        <position position="163"/>
    </location>
    <ligand>
        <name>GTP</name>
        <dbReference type="ChEBI" id="CHEBI:37565"/>
    </ligand>
</feature>
<feature type="binding site" evidence="2">
    <location>
        <position position="188"/>
    </location>
    <ligand>
        <name>GTP</name>
        <dbReference type="ChEBI" id="CHEBI:37565"/>
    </ligand>
</feature>
<feature type="binding site" evidence="2">
    <location>
        <position position="194"/>
    </location>
    <ligand>
        <name>GTP</name>
        <dbReference type="ChEBI" id="CHEBI:37565"/>
    </ligand>
</feature>
<feature type="binding site" evidence="2">
    <location>
        <position position="194"/>
    </location>
    <ligand>
        <name>Mg(2+)</name>
        <dbReference type="ChEBI" id="CHEBI:18420"/>
    </ligand>
</feature>
<feature type="binding site" evidence="2">
    <location>
        <position position="222"/>
    </location>
    <ligand>
        <name>GTP</name>
        <dbReference type="ChEBI" id="CHEBI:37565"/>
    </ligand>
</feature>
<feature type="binding site" evidence="2">
    <location>
        <position position="288"/>
    </location>
    <ligand>
        <name>GTP</name>
        <dbReference type="ChEBI" id="CHEBI:37565"/>
    </ligand>
</feature>
<feature type="binding site" evidence="2">
    <location>
        <position position="289"/>
    </location>
    <ligand>
        <name>GTP</name>
        <dbReference type="ChEBI" id="CHEBI:37565"/>
    </ligand>
</feature>
<feature type="binding site" evidence="2">
    <location>
        <position position="291"/>
    </location>
    <ligand>
        <name>GTP</name>
        <dbReference type="ChEBI" id="CHEBI:37565"/>
    </ligand>
</feature>
<feature type="binding site" evidence="2">
    <location>
        <position position="356"/>
    </location>
    <ligand>
        <name>GTP</name>
        <dbReference type="ChEBI" id="CHEBI:37565"/>
    </ligand>
</feature>
<feature type="lipid moiety-binding region" description="N-myristoyl glycine" evidence="2">
    <location>
        <position position="2"/>
    </location>
</feature>
<feature type="lipid moiety-binding region" description="S-palmitoyl cysteine" evidence="2">
    <location>
        <position position="5"/>
    </location>
</feature>
<dbReference type="EMBL" id="X87836">
    <property type="protein sequence ID" value="CAA61105.1"/>
    <property type="molecule type" value="mRNA"/>
</dbReference>
<dbReference type="SMR" id="P93564"/>
<dbReference type="FunCoup" id="P93564">
    <property type="interactions" value="1902"/>
</dbReference>
<dbReference type="STRING" id="4113.P93564"/>
<dbReference type="PaxDb" id="4113-PGSC0003DMT400033822"/>
<dbReference type="EnsemblPlants" id="RHC08H1G1124.2.1">
    <property type="protein sequence ID" value="RHC08H1G1124.2.1"/>
    <property type="gene ID" value="RHC08H1G1124.2"/>
</dbReference>
<dbReference type="Gramene" id="RHC08H1G1124.2.1">
    <property type="protein sequence ID" value="RHC08H1G1124.2.1"/>
    <property type="gene ID" value="RHC08H1G1124.2"/>
</dbReference>
<dbReference type="eggNOG" id="KOG0082">
    <property type="taxonomic scope" value="Eukaryota"/>
</dbReference>
<dbReference type="InParanoid" id="P93564"/>
<dbReference type="Proteomes" id="UP000011115">
    <property type="component" value="Unassembled WGS sequence"/>
</dbReference>
<dbReference type="ExpressionAtlas" id="P93564">
    <property type="expression patterns" value="baseline"/>
</dbReference>
<dbReference type="GO" id="GO:0005737">
    <property type="term" value="C:cytoplasm"/>
    <property type="evidence" value="ECO:0000318"/>
    <property type="project" value="GO_Central"/>
</dbReference>
<dbReference type="GO" id="GO:0005834">
    <property type="term" value="C:heterotrimeric G-protein complex"/>
    <property type="evidence" value="ECO:0000318"/>
    <property type="project" value="GO_Central"/>
</dbReference>
<dbReference type="GO" id="GO:0001664">
    <property type="term" value="F:G protein-coupled receptor binding"/>
    <property type="evidence" value="ECO:0000318"/>
    <property type="project" value="GO_Central"/>
</dbReference>
<dbReference type="GO" id="GO:0031683">
    <property type="term" value="F:G-protein beta/gamma-subunit complex binding"/>
    <property type="evidence" value="ECO:0000318"/>
    <property type="project" value="GO_Central"/>
</dbReference>
<dbReference type="GO" id="GO:0005525">
    <property type="term" value="F:GTP binding"/>
    <property type="evidence" value="ECO:0007669"/>
    <property type="project" value="UniProtKB-KW"/>
</dbReference>
<dbReference type="GO" id="GO:0003924">
    <property type="term" value="F:GTPase activity"/>
    <property type="evidence" value="ECO:0000318"/>
    <property type="project" value="GO_Central"/>
</dbReference>
<dbReference type="GO" id="GO:0046872">
    <property type="term" value="F:metal ion binding"/>
    <property type="evidence" value="ECO:0007669"/>
    <property type="project" value="UniProtKB-KW"/>
</dbReference>
<dbReference type="GO" id="GO:0007188">
    <property type="term" value="P:adenylate cyclase-modulating G protein-coupled receptor signaling pathway"/>
    <property type="evidence" value="ECO:0000318"/>
    <property type="project" value="GO_Central"/>
</dbReference>
<dbReference type="CDD" id="cd00066">
    <property type="entry name" value="G-alpha"/>
    <property type="match status" value="1"/>
</dbReference>
<dbReference type="FunFam" id="1.10.400.10:FF:000008">
    <property type="entry name" value="Guanine nucleotide-binding protein alpha-1 subunit"/>
    <property type="match status" value="1"/>
</dbReference>
<dbReference type="FunFam" id="3.40.50.300:FF:000733">
    <property type="entry name" value="Guanine nucleotide-binding protein alpha-1 subunit"/>
    <property type="match status" value="1"/>
</dbReference>
<dbReference type="Gene3D" id="1.10.400.10">
    <property type="entry name" value="GI Alpha 1, domain 2-like"/>
    <property type="match status" value="1"/>
</dbReference>
<dbReference type="Gene3D" id="3.40.50.300">
    <property type="entry name" value="P-loop containing nucleotide triphosphate hydrolases"/>
    <property type="match status" value="1"/>
</dbReference>
<dbReference type="InterPro" id="IPR001019">
    <property type="entry name" value="Gprotein_alpha_su"/>
</dbReference>
<dbReference type="InterPro" id="IPR011025">
    <property type="entry name" value="GproteinA_insert"/>
</dbReference>
<dbReference type="InterPro" id="IPR027417">
    <property type="entry name" value="P-loop_NTPase"/>
</dbReference>
<dbReference type="InterPro" id="IPR002976">
    <property type="entry name" value="Plant_Gprotein_alpha"/>
</dbReference>
<dbReference type="PANTHER" id="PTHR10218">
    <property type="entry name" value="GTP-BINDING PROTEIN ALPHA SUBUNIT"/>
    <property type="match status" value="1"/>
</dbReference>
<dbReference type="PANTHER" id="PTHR10218:SF302">
    <property type="entry name" value="GUANINE NUCLEOTIDE-BINDING PROTEIN ALPHA-5 SUBUNIT"/>
    <property type="match status" value="1"/>
</dbReference>
<dbReference type="Pfam" id="PF00503">
    <property type="entry name" value="G-alpha"/>
    <property type="match status" value="1"/>
</dbReference>
<dbReference type="PRINTS" id="PR00318">
    <property type="entry name" value="GPROTEINA"/>
</dbReference>
<dbReference type="PRINTS" id="PR01242">
    <property type="entry name" value="GPROTEINAPLT"/>
</dbReference>
<dbReference type="SMART" id="SM00275">
    <property type="entry name" value="G_alpha"/>
    <property type="match status" value="1"/>
</dbReference>
<dbReference type="SUPFAM" id="SSF52540">
    <property type="entry name" value="P-loop containing nucleoside triphosphate hydrolases"/>
    <property type="match status" value="1"/>
</dbReference>
<dbReference type="SUPFAM" id="SSF47895">
    <property type="entry name" value="Transducin (alpha subunit), insertion domain"/>
    <property type="match status" value="1"/>
</dbReference>
<dbReference type="PROSITE" id="PS51882">
    <property type="entry name" value="G_ALPHA"/>
    <property type="match status" value="1"/>
</dbReference>
<name>GPA1_SOLTU</name>
<protein>
    <recommendedName>
        <fullName>Guanine nucleotide-binding protein alpha-1 subunit</fullName>
        <shortName>GP-alpha-1</shortName>
    </recommendedName>
</protein>
<gene>
    <name type="primary">GPA1</name>
</gene>
<proteinExistence type="evidence at transcript level"/>
<reference key="1">
    <citation type="submission" date="1995-06" db="EMBL/GenBank/DDBJ databases">
        <authorList>
            <person name="Provart N.J."/>
            <person name="Ma H."/>
            <person name="Willmitzer L."/>
            <person name="Mueller-Roeber B."/>
        </authorList>
    </citation>
    <scope>NUCLEOTIDE SEQUENCE [MRNA]</scope>
    <source>
        <strain>cv. Desiree</strain>
        <tissue>Leaf</tissue>
    </source>
</reference>
<sequence>MGSLCSRNKHYSQADDEENTQTAEIERRIEQETKADKHIQKLLLLGAGDSGKSTIFKQIKLLFQTGFDEAELKNYIPVIHANVYQTIKILHDGSKELAQNELEASKYLLSAENKEIGEKLSEIGGRLDYPRLTKDLVQDIEALWKDPAIQETLLRGNELQVPDCAHYFMENLERFSDIHYIPTKEDVLFARIRTTGVVEIQFSPVGENKKSGEVYRLFDVGGQRNERRKWIHLFEGVTAVIFCAAISEYDQTLFEDERKNRMMETKELFEWVLKQPCFEKTSFMLFLNKFDIFEQKVLKVPLNTCEWFKDYQSVSTGKQEIEHAYEFVKKKFEESYFQCTAPDRVDRVFKIYRTTALDQKLVKKTFKLVDETLRRRNLFEAGLL</sequence>
<keyword id="KW-0342">GTP-binding</keyword>
<keyword id="KW-0378">Hydrolase</keyword>
<keyword id="KW-0449">Lipoprotein</keyword>
<keyword id="KW-0460">Magnesium</keyword>
<keyword id="KW-0479">Metal-binding</keyword>
<keyword id="KW-0519">Myristate</keyword>
<keyword id="KW-0547">Nucleotide-binding</keyword>
<keyword id="KW-0564">Palmitate</keyword>
<keyword id="KW-1185">Reference proteome</keyword>
<keyword id="KW-0807">Transducer</keyword>
<accession>P93564</accession>
<organism>
    <name type="scientific">Solanum tuberosum</name>
    <name type="common">Potato</name>
    <dbReference type="NCBI Taxonomy" id="4113"/>
    <lineage>
        <taxon>Eukaryota</taxon>
        <taxon>Viridiplantae</taxon>
        <taxon>Streptophyta</taxon>
        <taxon>Embryophyta</taxon>
        <taxon>Tracheophyta</taxon>
        <taxon>Spermatophyta</taxon>
        <taxon>Magnoliopsida</taxon>
        <taxon>eudicotyledons</taxon>
        <taxon>Gunneridae</taxon>
        <taxon>Pentapetalae</taxon>
        <taxon>asterids</taxon>
        <taxon>lamiids</taxon>
        <taxon>Solanales</taxon>
        <taxon>Solanaceae</taxon>
        <taxon>Solanoideae</taxon>
        <taxon>Solaneae</taxon>
        <taxon>Solanum</taxon>
    </lineage>
</organism>